<comment type="function">
    <text>Core component of nucleosome. Nucleosomes wrap and compact DNA into chromatin, limiting DNA accessibility to the cellular machineries which require DNA as a template. Histones thereby play a central role in transcription regulation, DNA repair, DNA replication and chromosomal stability. DNA accessibility is regulated via a complex set of post-translational modifications of histones, also called histone code, and nucleosome remodeling.</text>
</comment>
<comment type="subunit">
    <text>The nucleosome is a histone octamer containing two molecules each of H2A, H2B, H3 and H4 assembled in one H3-H4 heterotetramer and two H2A-H2B heterodimers. The octamer wraps approximately 147 bp of DNA.</text>
</comment>
<comment type="subcellular location">
    <subcellularLocation>
        <location>Nucleus</location>
    </subcellularLocation>
    <subcellularLocation>
        <location>Chromosome</location>
    </subcellularLocation>
</comment>
<comment type="PTM">
    <text evidence="1">The chromatin-associated form, but not the free cytoplasmic form, is phosphorylated on Thr-120 by NHK-1 during mitosis, and dephosphorylated during S-phase. Also phosphorylated on Thr-120 by NHK-1 during prophase I of meiosis; which is required for acetylation of H3 'Lys-14' and H4 'Lys-5', diassembly of the synaptonemal complex, and karyosome formation (By similarity).</text>
</comment>
<comment type="PTM">
    <text evidence="1">Monoubiquitination of Lys-119 by sce/dRING gives a specific tag for epigenetic transcriptional repression.</text>
</comment>
<comment type="PTM">
    <text evidence="1">Phosphorylation on Ser-2 is enhanced during mitosis. Phosphorylation on Ser-2 directly represses transcription (By similarity).</text>
</comment>
<comment type="similarity">
    <text evidence="4">Belongs to the histone H2A family.</text>
</comment>
<dbReference type="EMBL" id="AB073634">
    <property type="protein sequence ID" value="BAC54552.1"/>
    <property type="molecule type" value="Genomic_DNA"/>
</dbReference>
<dbReference type="EMBL" id="CH954179">
    <property type="protein sequence ID" value="EDV54390.1"/>
    <property type="molecule type" value="Genomic_DNA"/>
</dbReference>
<dbReference type="EMBL" id="CH954179">
    <property type="protein sequence ID" value="EDV54405.1"/>
    <property type="molecule type" value="Genomic_DNA"/>
</dbReference>
<dbReference type="EMBL" id="CH954179">
    <property type="protein sequence ID" value="EDV54410.1"/>
    <property type="molecule type" value="Genomic_DNA"/>
</dbReference>
<dbReference type="EMBL" id="CH954179">
    <property type="protein sequence ID" value="EDV54415.1"/>
    <property type="molecule type" value="Genomic_DNA"/>
</dbReference>
<dbReference type="EMBL" id="CH954179">
    <property type="protein sequence ID" value="EDV54420.1"/>
    <property type="molecule type" value="Genomic_DNA"/>
</dbReference>
<dbReference type="EMBL" id="CH954179">
    <property type="protein sequence ID" value="EDV54425.1"/>
    <property type="molecule type" value="Genomic_DNA"/>
</dbReference>
<dbReference type="EMBL" id="CH954179">
    <property type="protein sequence ID" value="EDV54430.1"/>
    <property type="molecule type" value="Genomic_DNA"/>
</dbReference>
<dbReference type="EMBL" id="CH954354">
    <property type="protein sequence ID" value="EDV45306.1"/>
    <property type="molecule type" value="Genomic_DNA"/>
</dbReference>
<dbReference type="EMBL" id="CH954354">
    <property type="protein sequence ID" value="EDV45311.1"/>
    <property type="molecule type" value="Genomic_DNA"/>
</dbReference>
<dbReference type="EMBL" id="CH954354">
    <property type="protein sequence ID" value="EDV45316.1"/>
    <property type="molecule type" value="Genomic_DNA"/>
</dbReference>
<dbReference type="EMBL" id="CH954354">
    <property type="protein sequence ID" value="EDV45321.1"/>
    <property type="molecule type" value="Genomic_DNA"/>
</dbReference>
<dbReference type="EMBL" id="CH954357">
    <property type="protein sequence ID" value="EDV45118.1"/>
    <property type="molecule type" value="Genomic_DNA"/>
</dbReference>
<dbReference type="EMBL" id="CH954357">
    <property type="protein sequence ID" value="EDV45123.1"/>
    <property type="molecule type" value="Genomic_DNA"/>
</dbReference>
<dbReference type="EMBL" id="CH954357">
    <property type="protein sequence ID" value="EDV45128.1"/>
    <property type="molecule type" value="Genomic_DNA"/>
</dbReference>
<dbReference type="EMBL" id="CH954357">
    <property type="protein sequence ID" value="EDV45133.1"/>
    <property type="molecule type" value="Genomic_DNA"/>
</dbReference>
<dbReference type="EMBL" id="CH954440">
    <property type="protein sequence ID" value="EDV45296.1"/>
    <property type="molecule type" value="Genomic_DNA"/>
</dbReference>
<dbReference type="EMBL" id="CH954440">
    <property type="protein sequence ID" value="EDV45301.1"/>
    <property type="molecule type" value="Genomic_DNA"/>
</dbReference>
<dbReference type="EMBL" id="CH954690">
    <property type="protein sequence ID" value="EDV45080.1"/>
    <property type="molecule type" value="Genomic_DNA"/>
</dbReference>
<dbReference type="EMBL" id="CH954690">
    <property type="protein sequence ID" value="EDV45085.1"/>
    <property type="molecule type" value="Genomic_DNA"/>
</dbReference>
<dbReference type="EMBL" id="CH954812">
    <property type="protein sequence ID" value="EDV45056.1"/>
    <property type="molecule type" value="Genomic_DNA"/>
</dbReference>
<dbReference type="EMBL" id="CH954812">
    <property type="protein sequence ID" value="EDV45061.1"/>
    <property type="molecule type" value="Genomic_DNA"/>
</dbReference>
<dbReference type="EMBL" id="CH955254">
    <property type="protein sequence ID" value="EDV45101.1"/>
    <property type="molecule type" value="Genomic_DNA"/>
</dbReference>
<dbReference type="EMBL" id="CH955280">
    <property type="protein sequence ID" value="EDV45333.1"/>
    <property type="molecule type" value="Genomic_DNA"/>
</dbReference>
<dbReference type="EMBL" id="CH955409">
    <property type="protein sequence ID" value="EDV45189.1"/>
    <property type="molecule type" value="Genomic_DNA"/>
</dbReference>
<dbReference type="EMBL" id="CH956180">
    <property type="protein sequence ID" value="EDV45097.1"/>
    <property type="molecule type" value="Genomic_DNA"/>
</dbReference>
<dbReference type="EMBL" id="CH956541">
    <property type="protein sequence ID" value="EDV60035.1"/>
    <property type="molecule type" value="Genomic_DNA"/>
</dbReference>
<dbReference type="EMBL" id="CH956753">
    <property type="protein sequence ID" value="EDV45075.1"/>
    <property type="molecule type" value="Genomic_DNA"/>
</dbReference>
<dbReference type="EMBL" id="CH956850">
    <property type="protein sequence ID" value="EDV60040.1"/>
    <property type="molecule type" value="Genomic_DNA"/>
</dbReference>
<dbReference type="EMBL" id="CH958597">
    <property type="protein sequence ID" value="EDV45182.1"/>
    <property type="molecule type" value="Genomic_DNA"/>
</dbReference>
<dbReference type="EMBL" id="CH958931">
    <property type="protein sequence ID" value="EDV45042.1"/>
    <property type="molecule type" value="Genomic_DNA"/>
</dbReference>
<dbReference type="RefSeq" id="XP_001974005.1">
    <property type="nucleotide sequence ID" value="XM_001973969.1"/>
</dbReference>
<dbReference type="RefSeq" id="XP_001974015.1">
    <property type="nucleotide sequence ID" value="XM_001973979.1"/>
</dbReference>
<dbReference type="RefSeq" id="XP_001974025.1">
    <property type="nucleotide sequence ID" value="XM_001973989.1"/>
</dbReference>
<dbReference type="RefSeq" id="XP_001983153.1">
    <property type="nucleotide sequence ID" value="XM_001983117.2"/>
</dbReference>
<dbReference type="SMR" id="P84052"/>
<dbReference type="EnsemblMetazoa" id="FBtr0139894">
    <property type="protein sequence ID" value="FBpp0138386"/>
    <property type="gene ID" value="FBgn0112041"/>
</dbReference>
<dbReference type="EnsemblMetazoa" id="FBtr0141359">
    <property type="protein sequence ID" value="FBpp0139851"/>
    <property type="gene ID" value="FBgn0113484"/>
</dbReference>
<dbReference type="EnsemblMetazoa" id="FBtr0141363">
    <property type="protein sequence ID" value="FBpp0139855"/>
    <property type="gene ID" value="FBgn0113488"/>
</dbReference>
<dbReference type="EnsemblMetazoa" id="FBtr0141366">
    <property type="protein sequence ID" value="FBpp0139858"/>
    <property type="gene ID" value="FBgn0113491"/>
</dbReference>
<dbReference type="EnsemblMetazoa" id="FBtr0141369">
    <property type="protein sequence ID" value="FBpp0139861"/>
    <property type="gene ID" value="FBgn0113494"/>
</dbReference>
<dbReference type="EnsemblMetazoa" id="FBtr0141373">
    <property type="protein sequence ID" value="FBpp0139865"/>
    <property type="gene ID" value="FBgn0113498"/>
</dbReference>
<dbReference type="EnsemblMetazoa" id="FBtr0141376">
    <property type="protein sequence ID" value="FBpp0139868"/>
    <property type="gene ID" value="FBgn0113501"/>
</dbReference>
<dbReference type="EnsemblMetazoa" id="FBtr0141386">
    <property type="protein sequence ID" value="FBpp0139878"/>
    <property type="gene ID" value="FBgn0113511"/>
</dbReference>
<dbReference type="EnsemblMetazoa" id="XM_001973954.2">
    <property type="protein sequence ID" value="XP_001973990.1"/>
    <property type="gene ID" value="LOC6548739"/>
</dbReference>
<dbReference type="EnsemblMetazoa" id="XM_001973974.2">
    <property type="protein sequence ID" value="XP_001974010.1"/>
    <property type="gene ID" value="LOC6548691"/>
</dbReference>
<dbReference type="EnsemblMetazoa" id="XM_001973984.2">
    <property type="protein sequence ID" value="XP_001974020.1"/>
    <property type="gene ID" value="LOC6548669"/>
</dbReference>
<dbReference type="EnsemblMetazoa" id="XM_001973994.2">
    <property type="protein sequence ID" value="XP_001974030.1"/>
    <property type="gene ID" value="LOC6549046"/>
</dbReference>
<dbReference type="EnsemblMetazoa" id="XM_026983599.1">
    <property type="protein sequence ID" value="XP_026839400.1"/>
    <property type="gene ID" value="LOC6548706"/>
</dbReference>
<dbReference type="EnsemblMetazoa" id="XM_026983600.1">
    <property type="protein sequence ID" value="XP_026839401.1"/>
    <property type="gene ID" value="LOC113564766"/>
</dbReference>
<dbReference type="EnsemblMetazoa" id="XM_026983601.1">
    <property type="protein sequence ID" value="XP_026839402.1"/>
    <property type="gene ID" value="LOC6548711"/>
</dbReference>
<dbReference type="EnsemblMetazoa" id="XM_026983614.1">
    <property type="protein sequence ID" value="XP_026839415.1"/>
    <property type="gene ID" value="LOC113564783"/>
</dbReference>
<dbReference type="EnsemblMetazoa" id="XM_026983615.1">
    <property type="protein sequence ID" value="XP_026839416.1"/>
    <property type="gene ID" value="LOC113564784"/>
</dbReference>
<dbReference type="EnsemblMetazoa" id="XM_026983639.1">
    <property type="protein sequence ID" value="XP_026839440.1"/>
    <property type="gene ID" value="LOC113564790"/>
</dbReference>
<dbReference type="EnsemblMetazoa" id="XM_026983646.1">
    <property type="protein sequence ID" value="XP_026839447.1"/>
    <property type="gene ID" value="LOC113564799"/>
</dbReference>
<dbReference type="GeneID" id="6548669"/>
<dbReference type="GeneID" id="6548691"/>
<dbReference type="GeneID" id="6548739"/>
<dbReference type="KEGG" id="der:6548669"/>
<dbReference type="KEGG" id="der:6548691"/>
<dbReference type="KEGG" id="der:6548739"/>
<dbReference type="KEGG" id="der:6549046"/>
<dbReference type="eggNOG" id="KOG1756">
    <property type="taxonomic scope" value="Eukaryota"/>
</dbReference>
<dbReference type="HOGENOM" id="CLU_062828_3_3_1"/>
<dbReference type="OMA" id="NYCERIG"/>
<dbReference type="OrthoDB" id="7839361at2759"/>
<dbReference type="PhylomeDB" id="P84052"/>
<dbReference type="ChiTaRS" id="His2Av">
    <property type="organism name" value="fly"/>
</dbReference>
<dbReference type="Proteomes" id="UP000008711">
    <property type="component" value="Unassembled WGS sequence"/>
</dbReference>
<dbReference type="GO" id="GO:0000786">
    <property type="term" value="C:nucleosome"/>
    <property type="evidence" value="ECO:0007669"/>
    <property type="project" value="UniProtKB-KW"/>
</dbReference>
<dbReference type="GO" id="GO:0005634">
    <property type="term" value="C:nucleus"/>
    <property type="evidence" value="ECO:0007669"/>
    <property type="project" value="UniProtKB-SubCell"/>
</dbReference>
<dbReference type="GO" id="GO:0005704">
    <property type="term" value="C:polytene chromosome band"/>
    <property type="evidence" value="ECO:0007669"/>
    <property type="project" value="EnsemblMetazoa"/>
</dbReference>
<dbReference type="GO" id="GO:0003677">
    <property type="term" value="F:DNA binding"/>
    <property type="evidence" value="ECO:0007669"/>
    <property type="project" value="UniProtKB-KW"/>
</dbReference>
<dbReference type="GO" id="GO:0046982">
    <property type="term" value="F:protein heterodimerization activity"/>
    <property type="evidence" value="ECO:0007669"/>
    <property type="project" value="InterPro"/>
</dbReference>
<dbReference type="GO" id="GO:0030527">
    <property type="term" value="F:structural constituent of chromatin"/>
    <property type="evidence" value="ECO:0007669"/>
    <property type="project" value="InterPro"/>
</dbReference>
<dbReference type="GO" id="GO:0007526">
    <property type="term" value="P:larval somatic muscle development"/>
    <property type="evidence" value="ECO:0007669"/>
    <property type="project" value="EnsemblMetazoa"/>
</dbReference>
<dbReference type="CDD" id="cd00074">
    <property type="entry name" value="HFD_H2A"/>
    <property type="match status" value="1"/>
</dbReference>
<dbReference type="FunFam" id="1.10.20.10:FF:000173">
    <property type="entry name" value="Histone H2A"/>
    <property type="match status" value="1"/>
</dbReference>
<dbReference type="Gene3D" id="1.10.20.10">
    <property type="entry name" value="Histone, subunit A"/>
    <property type="match status" value="1"/>
</dbReference>
<dbReference type="InterPro" id="IPR009072">
    <property type="entry name" value="Histone-fold"/>
</dbReference>
<dbReference type="InterPro" id="IPR002119">
    <property type="entry name" value="Histone_H2A"/>
</dbReference>
<dbReference type="InterPro" id="IPR007125">
    <property type="entry name" value="Histone_H2A/H2B/H3"/>
</dbReference>
<dbReference type="InterPro" id="IPR032454">
    <property type="entry name" value="Histone_H2A_C"/>
</dbReference>
<dbReference type="InterPro" id="IPR032458">
    <property type="entry name" value="Histone_H2A_CS"/>
</dbReference>
<dbReference type="PANTHER" id="PTHR23430">
    <property type="entry name" value="HISTONE H2A"/>
    <property type="match status" value="1"/>
</dbReference>
<dbReference type="Pfam" id="PF00125">
    <property type="entry name" value="Histone"/>
    <property type="match status" value="1"/>
</dbReference>
<dbReference type="Pfam" id="PF16211">
    <property type="entry name" value="Histone_H2A_C"/>
    <property type="match status" value="1"/>
</dbReference>
<dbReference type="PRINTS" id="PR00620">
    <property type="entry name" value="HISTONEH2A"/>
</dbReference>
<dbReference type="SMART" id="SM00414">
    <property type="entry name" value="H2A"/>
    <property type="match status" value="1"/>
</dbReference>
<dbReference type="SUPFAM" id="SSF47113">
    <property type="entry name" value="Histone-fold"/>
    <property type="match status" value="1"/>
</dbReference>
<dbReference type="PROSITE" id="PS00046">
    <property type="entry name" value="HISTONE_H2A"/>
    <property type="match status" value="1"/>
</dbReference>
<sequence length="124" mass="13363">MSGRGKGGKVKGKAKSRSNRAGLQFPVGRIHRLLRKGNYAERVGAGAPVYLAAVMEYLAAEVLELAGNAARDNKKTRIIPRHLQLAIRNDEELNKLLSGVTIAQGGVLPNIQAVLLPKKTEKKA</sequence>
<accession>P84052</accession>
<accession>B3NLS4</accession>
<accession>P02267</accession>
<protein>
    <recommendedName>
        <fullName>Histone H2A</fullName>
    </recommendedName>
</protein>
<proteinExistence type="inferred from homology"/>
<feature type="initiator methionine" description="Removed" evidence="1">
    <location>
        <position position="1"/>
    </location>
</feature>
<feature type="chain" id="PRO_0000055220" description="Histone H2A">
    <location>
        <begin position="2"/>
        <end position="124"/>
    </location>
</feature>
<feature type="region of interest" description="Disordered" evidence="3">
    <location>
        <begin position="1"/>
        <end position="21"/>
    </location>
</feature>
<feature type="compositionally biased region" description="Basic residues" evidence="3">
    <location>
        <begin position="1"/>
        <end position="18"/>
    </location>
</feature>
<feature type="modified residue" description="N-acetylserine" evidence="1">
    <location>
        <position position="2"/>
    </location>
</feature>
<feature type="modified residue" description="Phosphoserine" evidence="1">
    <location>
        <position position="2"/>
    </location>
</feature>
<feature type="modified residue" description="N6-succinyllysine" evidence="2">
    <location>
        <position position="36"/>
    </location>
</feature>
<feature type="modified residue" description="N5-methylglutamine" evidence="1">
    <location>
        <position position="104"/>
    </location>
</feature>
<feature type="modified residue" description="Phosphothreonine" evidence="1">
    <location>
        <position position="120"/>
    </location>
</feature>
<feature type="cross-link" description="Glycyl lysine isopeptide (Lys-Gly) (interchain with G-Cter in ubiquitin)" evidence="1">
    <location>
        <position position="119"/>
    </location>
</feature>
<keyword id="KW-0007">Acetylation</keyword>
<keyword id="KW-0158">Chromosome</keyword>
<keyword id="KW-0238">DNA-binding</keyword>
<keyword id="KW-1017">Isopeptide bond</keyword>
<keyword id="KW-0488">Methylation</keyword>
<keyword id="KW-0544">Nucleosome core</keyword>
<keyword id="KW-0539">Nucleus</keyword>
<keyword id="KW-0597">Phosphoprotein</keyword>
<keyword id="KW-0832">Ubl conjugation</keyword>
<organism>
    <name type="scientific">Drosophila erecta</name>
    <name type="common">Fruit fly</name>
    <dbReference type="NCBI Taxonomy" id="7220"/>
    <lineage>
        <taxon>Eukaryota</taxon>
        <taxon>Metazoa</taxon>
        <taxon>Ecdysozoa</taxon>
        <taxon>Arthropoda</taxon>
        <taxon>Hexapoda</taxon>
        <taxon>Insecta</taxon>
        <taxon>Pterygota</taxon>
        <taxon>Neoptera</taxon>
        <taxon>Endopterygota</taxon>
        <taxon>Diptera</taxon>
        <taxon>Brachycera</taxon>
        <taxon>Muscomorpha</taxon>
        <taxon>Ephydroidea</taxon>
        <taxon>Drosophilidae</taxon>
        <taxon>Drosophila</taxon>
        <taxon>Sophophora</taxon>
    </lineage>
</organism>
<name>H2A_DROER</name>
<reference key="1">
    <citation type="journal article" date="2001" name="Genes Genet. Syst.">
        <title>Molecular evolutionary analysis of a histone gene repeating unit from Drosophila simulans.</title>
        <authorList>
            <person name="Tsunemoto K."/>
            <person name="Matsuo Y."/>
        </authorList>
    </citation>
    <scope>NUCLEOTIDE SEQUENCE [GENOMIC DNA] (HIS2A)</scope>
</reference>
<reference key="2">
    <citation type="journal article" date="2007" name="Nature">
        <title>Evolution of genes and genomes on the Drosophila phylogeny.</title>
        <authorList>
            <consortium name="Drosophila 12 genomes consortium"/>
        </authorList>
    </citation>
    <scope>NUCLEOTIDE SEQUENCE [LARGE SCALE GENOMIC DNA] (GG10951; GG10964; GG11003; GG11006; GG11009; GG11013; GG12574; GG12577; GG12989; GG13016; GG13019; GG13022; GG13026; GG13060; GG16371; GG18133; GG18465; GG19786; GG19797; GG19829; GG19840; GG19849; GG19852; GG21305; GG21309; GG21312; GG21315; GG21319; GG21322 AND GG21332)</scope>
    <source>
        <strain>Tucson 14021-0224.01</strain>
    </source>
</reference>
<evidence type="ECO:0000250" key="1"/>
<evidence type="ECO:0000250" key="2">
    <source>
        <dbReference type="UniProtKB" id="P84051"/>
    </source>
</evidence>
<evidence type="ECO:0000256" key="3">
    <source>
        <dbReference type="SAM" id="MobiDB-lite"/>
    </source>
</evidence>
<evidence type="ECO:0000305" key="4"/>
<gene>
    <name type="primary">His2A</name>
    <name type="synonym">H2a</name>
</gene>
<gene>
    <name type="ORF">GG10951</name>
</gene>
<gene>
    <name type="ORF">GG10964</name>
</gene>
<gene>
    <name type="ORF">GG11003</name>
</gene>
<gene>
    <name type="ORF">GG11006</name>
</gene>
<gene>
    <name type="ORF">GG11009</name>
</gene>
<gene>
    <name type="ORF">GG11013</name>
</gene>
<gene>
    <name type="ORF">GG12574</name>
</gene>
<gene>
    <name type="ORF">GG12577</name>
</gene>
<gene>
    <name type="ORF">GG12989</name>
</gene>
<gene>
    <name type="ORF">GG13016</name>
</gene>
<gene>
    <name type="ORF">GG13019</name>
</gene>
<gene>
    <name type="ORF">GG13022</name>
</gene>
<gene>
    <name type="ORF">GG13026</name>
</gene>
<gene>
    <name type="ORF">GG13060</name>
</gene>
<gene>
    <name type="ORF">GG16371</name>
</gene>
<gene>
    <name type="ORF">GG18133</name>
</gene>
<gene>
    <name type="ORF">GG18465</name>
</gene>
<gene>
    <name type="ORF">GG19786</name>
</gene>
<gene>
    <name type="ORF">GG19797</name>
</gene>
<gene>
    <name type="ORF">GG19829</name>
</gene>
<gene>
    <name type="ORF">GG19840</name>
</gene>
<gene>
    <name type="ORF">GG19849</name>
</gene>
<gene>
    <name type="ORF">GG19852</name>
</gene>
<gene>
    <name type="ORF">GG21305</name>
</gene>
<gene>
    <name type="ORF">GG21309</name>
</gene>
<gene>
    <name type="ORF">GG21312</name>
</gene>
<gene>
    <name type="ORF">GG21315</name>
</gene>
<gene>
    <name type="ORF">GG21319</name>
</gene>
<gene>
    <name type="ORF">GG21322</name>
</gene>
<gene>
    <name type="ORF">GG21332</name>
</gene>